<gene>
    <name evidence="1" type="primary">lpxK</name>
    <name type="ordered locus">Bamb_2593</name>
</gene>
<feature type="chain" id="PRO_0000291199" description="Tetraacyldisaccharide 4'-kinase">
    <location>
        <begin position="1"/>
        <end position="342"/>
    </location>
</feature>
<feature type="binding site" evidence="1">
    <location>
        <begin position="68"/>
        <end position="75"/>
    </location>
    <ligand>
        <name>ATP</name>
        <dbReference type="ChEBI" id="CHEBI:30616"/>
    </ligand>
</feature>
<sequence>MSAPGGPLARLEARVTREWQRRGALAWALTPFACVFGLCAALRRTAYAQGWKQPVDVGVPVVVVGNVTVGGTGKTPTVIALVDALRAAGFTPGVVSRGYGANVKTPTAVTPASRASAAGDEPLLIARRTDAPVWVCPDRVAAAQALRAAHPDVDVIVSDDGLQHYRLARTVELVVFDHRLGGNGFLLPAGPLREPLSRHRDATLVNDPYSGALPPWPDTYALALTPGAAWHLDQPALRRPLSQFAHERVLAAAGIGAPERFFATLRAAGLAPTTRALPDHYAFADNPFVDDAVDAILITEKDAVKLGASWRDARLWVVPVEAALDPRLIALVVEKLRGRSPA</sequence>
<evidence type="ECO:0000255" key="1">
    <source>
        <dbReference type="HAMAP-Rule" id="MF_00409"/>
    </source>
</evidence>
<dbReference type="EC" id="2.7.1.130" evidence="1"/>
<dbReference type="EMBL" id="CP000440">
    <property type="protein sequence ID" value="ABI88149.1"/>
    <property type="molecule type" value="Genomic_DNA"/>
</dbReference>
<dbReference type="RefSeq" id="WP_011657742.1">
    <property type="nucleotide sequence ID" value="NC_008390.1"/>
</dbReference>
<dbReference type="SMR" id="Q0BCH4"/>
<dbReference type="GeneID" id="93085205"/>
<dbReference type="KEGG" id="bam:Bamb_2593"/>
<dbReference type="PATRIC" id="fig|339670.21.peg.2309"/>
<dbReference type="eggNOG" id="COG1663">
    <property type="taxonomic scope" value="Bacteria"/>
</dbReference>
<dbReference type="UniPathway" id="UPA00359">
    <property type="reaction ID" value="UER00482"/>
</dbReference>
<dbReference type="Proteomes" id="UP000000662">
    <property type="component" value="Chromosome 1"/>
</dbReference>
<dbReference type="GO" id="GO:0005886">
    <property type="term" value="C:plasma membrane"/>
    <property type="evidence" value="ECO:0007669"/>
    <property type="project" value="TreeGrafter"/>
</dbReference>
<dbReference type="GO" id="GO:0005524">
    <property type="term" value="F:ATP binding"/>
    <property type="evidence" value="ECO:0007669"/>
    <property type="project" value="UniProtKB-UniRule"/>
</dbReference>
<dbReference type="GO" id="GO:0009029">
    <property type="term" value="F:tetraacyldisaccharide 4'-kinase activity"/>
    <property type="evidence" value="ECO:0007669"/>
    <property type="project" value="UniProtKB-UniRule"/>
</dbReference>
<dbReference type="GO" id="GO:0009245">
    <property type="term" value="P:lipid A biosynthetic process"/>
    <property type="evidence" value="ECO:0007669"/>
    <property type="project" value="UniProtKB-UniRule"/>
</dbReference>
<dbReference type="GO" id="GO:0009244">
    <property type="term" value="P:lipopolysaccharide core region biosynthetic process"/>
    <property type="evidence" value="ECO:0007669"/>
    <property type="project" value="TreeGrafter"/>
</dbReference>
<dbReference type="HAMAP" id="MF_00409">
    <property type="entry name" value="LpxK"/>
    <property type="match status" value="1"/>
</dbReference>
<dbReference type="InterPro" id="IPR003758">
    <property type="entry name" value="LpxK"/>
</dbReference>
<dbReference type="InterPro" id="IPR027417">
    <property type="entry name" value="P-loop_NTPase"/>
</dbReference>
<dbReference type="NCBIfam" id="TIGR00682">
    <property type="entry name" value="lpxK"/>
    <property type="match status" value="1"/>
</dbReference>
<dbReference type="PANTHER" id="PTHR42724">
    <property type="entry name" value="TETRAACYLDISACCHARIDE 4'-KINASE"/>
    <property type="match status" value="1"/>
</dbReference>
<dbReference type="PANTHER" id="PTHR42724:SF1">
    <property type="entry name" value="TETRAACYLDISACCHARIDE 4'-KINASE, MITOCHONDRIAL-RELATED"/>
    <property type="match status" value="1"/>
</dbReference>
<dbReference type="Pfam" id="PF02606">
    <property type="entry name" value="LpxK"/>
    <property type="match status" value="1"/>
</dbReference>
<dbReference type="SUPFAM" id="SSF52540">
    <property type="entry name" value="P-loop containing nucleoside triphosphate hydrolases"/>
    <property type="match status" value="1"/>
</dbReference>
<accession>Q0BCH4</accession>
<protein>
    <recommendedName>
        <fullName evidence="1">Tetraacyldisaccharide 4'-kinase</fullName>
        <ecNumber evidence="1">2.7.1.130</ecNumber>
    </recommendedName>
    <alternativeName>
        <fullName evidence="1">Lipid A 4'-kinase</fullName>
    </alternativeName>
</protein>
<organism>
    <name type="scientific">Burkholderia ambifaria (strain ATCC BAA-244 / DSM 16087 / CCUG 44356 / LMG 19182 / AMMD)</name>
    <name type="common">Burkholderia cepacia (strain AMMD)</name>
    <dbReference type="NCBI Taxonomy" id="339670"/>
    <lineage>
        <taxon>Bacteria</taxon>
        <taxon>Pseudomonadati</taxon>
        <taxon>Pseudomonadota</taxon>
        <taxon>Betaproteobacteria</taxon>
        <taxon>Burkholderiales</taxon>
        <taxon>Burkholderiaceae</taxon>
        <taxon>Burkholderia</taxon>
        <taxon>Burkholderia cepacia complex</taxon>
    </lineage>
</organism>
<proteinExistence type="inferred from homology"/>
<comment type="function">
    <text evidence="1">Transfers the gamma-phosphate of ATP to the 4'-position of a tetraacyldisaccharide 1-phosphate intermediate (termed DS-1-P) to form tetraacyldisaccharide 1,4'-bis-phosphate (lipid IVA).</text>
</comment>
<comment type="catalytic activity">
    <reaction evidence="1">
        <text>a lipid A disaccharide + ATP = a lipid IVA + ADP + H(+)</text>
        <dbReference type="Rhea" id="RHEA:67840"/>
        <dbReference type="ChEBI" id="CHEBI:15378"/>
        <dbReference type="ChEBI" id="CHEBI:30616"/>
        <dbReference type="ChEBI" id="CHEBI:176343"/>
        <dbReference type="ChEBI" id="CHEBI:176425"/>
        <dbReference type="ChEBI" id="CHEBI:456216"/>
        <dbReference type="EC" id="2.7.1.130"/>
    </reaction>
</comment>
<comment type="pathway">
    <text evidence="1">Glycolipid biosynthesis; lipid IV(A) biosynthesis; lipid IV(A) from (3R)-3-hydroxytetradecanoyl-[acyl-carrier-protein] and UDP-N-acetyl-alpha-D-glucosamine: step 6/6.</text>
</comment>
<comment type="similarity">
    <text evidence="1">Belongs to the LpxK family.</text>
</comment>
<reference key="1">
    <citation type="submission" date="2006-08" db="EMBL/GenBank/DDBJ databases">
        <title>Complete sequence of chromosome 1 of Burkholderia cepacia AMMD.</title>
        <authorList>
            <person name="Copeland A."/>
            <person name="Lucas S."/>
            <person name="Lapidus A."/>
            <person name="Barry K."/>
            <person name="Detter J.C."/>
            <person name="Glavina del Rio T."/>
            <person name="Hammon N."/>
            <person name="Israni S."/>
            <person name="Pitluck S."/>
            <person name="Bruce D."/>
            <person name="Chain P."/>
            <person name="Malfatti S."/>
            <person name="Shin M."/>
            <person name="Vergez L."/>
            <person name="Schmutz J."/>
            <person name="Larimer F."/>
            <person name="Land M."/>
            <person name="Hauser L."/>
            <person name="Kyrpides N."/>
            <person name="Kim E."/>
            <person name="Parke J."/>
            <person name="Coenye T."/>
            <person name="Konstantinidis K."/>
            <person name="Ramette A."/>
            <person name="Tiedje J."/>
            <person name="Richardson P."/>
        </authorList>
    </citation>
    <scope>NUCLEOTIDE SEQUENCE [LARGE SCALE GENOMIC DNA]</scope>
    <source>
        <strain>ATCC BAA-244 / DSM 16087 / CCUG 44356 / LMG 19182 / AMMD</strain>
    </source>
</reference>
<keyword id="KW-0067">ATP-binding</keyword>
<keyword id="KW-0418">Kinase</keyword>
<keyword id="KW-0441">Lipid A biosynthesis</keyword>
<keyword id="KW-0444">Lipid biosynthesis</keyword>
<keyword id="KW-0443">Lipid metabolism</keyword>
<keyword id="KW-0547">Nucleotide-binding</keyword>
<keyword id="KW-0808">Transferase</keyword>
<name>LPXK_BURCM</name>